<gene>
    <name type="primary">Mgat5</name>
</gene>
<accession>Q8R4G6</accession>
<protein>
    <recommendedName>
        <fullName>Alpha-1,6-mannosylglycoprotein 6-beta-N-acetylglucosaminyltransferase A</fullName>
        <ecNumber evidence="4 6">2.4.1.155</ecNumber>
    </recommendedName>
    <alternativeName>
        <fullName>Alpha-mannoside beta-1,6-N-acetylglucosaminyltransferase</fullName>
    </alternativeName>
    <alternativeName>
        <fullName>GlcNAc-T V</fullName>
        <shortName>GNT-V</shortName>
    </alternativeName>
    <alternativeName>
        <fullName>Mannoside acetylglucosaminyltransferase 5</fullName>
    </alternativeName>
    <alternativeName>
        <fullName>N-acetylglucosaminyl-transferase V</fullName>
    </alternativeName>
    <component>
        <recommendedName>
            <fullName evidence="10">Secreted alpha-1,6-mannosylglycoprotein 6-beta-N-acetylglucosaminyltransferase A</fullName>
        </recommendedName>
        <alternativeName>
            <fullName evidence="10">Secreted beta-1,6-N-acetylglucosaminyltransferase V</fullName>
            <shortName evidence="10">Secreted GNT-V</shortName>
        </alternativeName>
    </component>
</protein>
<evidence type="ECO:0000250" key="1">
    <source>
        <dbReference type="UniProtKB" id="P97259"/>
    </source>
</evidence>
<evidence type="ECO:0000250" key="2">
    <source>
        <dbReference type="UniProtKB" id="Q09328"/>
    </source>
</evidence>
<evidence type="ECO:0000255" key="3"/>
<evidence type="ECO:0000269" key="4">
    <source>
    </source>
</evidence>
<evidence type="ECO:0000269" key="5">
    <source>
    </source>
</evidence>
<evidence type="ECO:0000269" key="6">
    <source>
    </source>
</evidence>
<evidence type="ECO:0000269" key="7">
    <source>
    </source>
</evidence>
<evidence type="ECO:0000269" key="8">
    <source>
    </source>
</evidence>
<evidence type="ECO:0000269" key="9">
    <source>
    </source>
</evidence>
<evidence type="ECO:0000305" key="10"/>
<comment type="function">
    <text evidence="2 4 5 6 7 8 9">Catalyzes the addition of N-acetylglucosamine (GlcNAc) in beta 1-6 linkage to the alpha-linked mannose of biantennary N-linked oligosaccharides (PubMed:10700233, PubMed:14561752, PubMed:22715095). Catalyzes an important step in the biosynthesis of branched, complex-type N-glycans, such as those found on EGFR, TGFR (TGF-beta receptor) and CDH2 (PubMed:10700233, PubMed:12122020, PubMed:14561752, PubMed:15459394, PubMed:22715095). Via its role in the biosynthesis of complex N-glycans, plays an important role in the activation of cellular signaling pathways, reorganization of the actin cytoskeleton, cell-cell adhesion and cell migration (PubMed:10700233, PubMed:14561752, PubMed:15459394). MGAT5-dependent EGFR N-glycosylation enhances the interaction between EGFR and LGALS3 and thereby prevents rapid EGFR endocytosis and prolongs EGFR signaling (PubMed:15459394). Required for efficient interaction between TGFB1 and its receptor (PubMed:15459394). Enhances activation of intracellular signaling pathways by several types of growth factors, including FGF2, PDGF, IGF, TGFB1 and EGF (PubMed:15459394). MGAT5-dependent CDH2 N-glycosylation inhibits CDH2-mediated homotypic cell-cell adhesion and contributes to the regulation of downstream signaling pathways (PubMed:14561752). Promotes cell migration (PubMed:14561752, PubMed:15459394). Contributes to the regulation of the inflammatory response (PubMed:11217864, PubMed:15459394). MGAT5-dependent TCR N-glycosylation enhances the interaction between TCR and LGALS3, limits agonist-induced TCR clustering, and thereby dampens TCR-mediated responses to antigens (PubMed:11217864). Required for normal leukocyte evasation and accumulation at sites of inflammation (PubMed:15459394). Inhibits attachment of monocytes to the vascular endothelium and subsequent monocyte diapedesis (By similarity).</text>
</comment>
<comment type="function">
    <molecule>Secreted alpha-1,6-mannosylglycoprotein 6-beta-N-acetylglucosaminyltransferase A</molecule>
    <text evidence="2">Promotes proliferation of umbilical vein endothelial cells and angiogenesis, at least in part by promoting the release of the growth factor FGF2 from the extracellular matrix.</text>
</comment>
<comment type="catalytic activity">
    <reaction evidence="4 6">
        <text>N(4)-{beta-D-GlcNAc-(1-&gt;2)-[beta-D-GlcNAc-(1-&gt;4)]-alpha-D-Man-(1-&gt;3)-[beta-D-GlcNAc-(1-&gt;2)-alpha-D-Man-(1-&gt;6)]-beta-D-Man-(1-&gt;4)-beta-D-GlcNAc-(1-&gt;4)-beta-D-GlcNAc}-L-asparaginyl-[protein] + UDP-N-acetyl-alpha-D-glucosamine = N(4)-{beta-D-GlcNAc-(1-&gt;2)-[beta-D-GlcNAc-(1-&gt;4)]-alpha-D-Man-(1-&gt;3)-[beta-D-GlcNAc-(1-&gt;2)-[beta-D-GlcNAc-(1-&gt;6)]-alpha-D-Man-(1-&gt;6)]-beta-D-Man-(1-&gt;4)-beta-D-GlcNAc-(1-&gt;4)-beta-D-GlcNAc}-L-asparaginyl-[protein] + UDP + H(+)</text>
        <dbReference type="Rhea" id="RHEA:16921"/>
        <dbReference type="Rhea" id="RHEA-COMP:14374"/>
        <dbReference type="Rhea" id="RHEA-COMP:14377"/>
        <dbReference type="ChEBI" id="CHEBI:15378"/>
        <dbReference type="ChEBI" id="CHEBI:57705"/>
        <dbReference type="ChEBI" id="CHEBI:58223"/>
        <dbReference type="ChEBI" id="CHEBI:139507"/>
        <dbReference type="ChEBI" id="CHEBI:139510"/>
        <dbReference type="EC" id="2.4.1.155"/>
    </reaction>
</comment>
<comment type="pathway">
    <text evidence="4 6 9">Protein modification; protein glycosylation.</text>
</comment>
<comment type="subcellular location">
    <subcellularLocation>
        <location evidence="1">Golgi apparatus membrane</location>
        <topology evidence="2">Single-pass type II membrane protein</topology>
    </subcellularLocation>
    <subcellularLocation>
        <location evidence="4">Perikaryon</location>
    </subcellularLocation>
</comment>
<comment type="subcellular location">
    <molecule>Secreted alpha-1,6-mannosylglycoprotein 6-beta-N-acetylglucosaminyltransferase A</molecule>
    <subcellularLocation>
        <location evidence="2">Secreted</location>
    </subcellularLocation>
</comment>
<comment type="tissue specificity">
    <text evidence="4">Detected in cerebellum.</text>
</comment>
<comment type="PTM">
    <text evidence="2">N-glycosylated.</text>
</comment>
<comment type="PTM">
    <text evidence="2">A secreted form is released from the membrane after cleavage by gamma-secretase.</text>
</comment>
<comment type="disruption phenotype">
    <text evidence="4 5 7 9">Mice are born at the expected Mendelian rate and have no visible phenotype at birth. Adult mice display abnormal leukocyte recruitment to inflamed tissues, hypersensitivity of T cells to agonists that activate T cell receptors, an age-related decrease in the cellularity of kidney glomeruli and a tendency to develop proliferative glomerulonephritis, plus defective nurturing behavior (PubMed:10700233, PubMed:11217864). Mutant mice show increased responsiveness to treatments that cause delayed-type hypersensitivity (PubMed:11217864). Mice show increased incidence of autoimmune encephalomyelitis in response to injections with MBP (PubMed:11217864). Transgenic mice that express polyomavirus middle T antigen develop mammary tumors; 50% of female wild-type mice have detectable tumors after 16 weeks, but it takes 24 weeks until 50% of the female mice that lack Mgat5 develop mammary tumors. Male mice that express polyomavirus middle T antigen develop mammary tumors after 6 to 9 months; males that lack Mgat5 develop tumors after 10 to 13 months. Formation of lung metastases is about 5% of wild-type (PubMed:10700233). Tumor initiation is not decreased in mice that lack Mgat5, but tumor growth is strongly decreased (PubMed:10700233). Tumor cells from mutant mice show impaired membrane ruffling, probably due to decreased activation of phosphoinositide-3-kinase (PI3K) (PubMed:10700233). Embryonic fibroblasts from Mgat5-deficient mice display increased Cdh2-mediated cell-cell adhesion (PubMed:14561752). Mutant mice that lack both Mgat5 and Mgat5b display no visible changes in brain anatomy, but their brains display defective biosynthesis of both O-mannosyl glycans and N-linked glycans (PubMed:22715095).</text>
</comment>
<comment type="similarity">
    <text evidence="10">Belongs to the glycosyltransferase 18 family.</text>
</comment>
<sequence>MAFFSPWKLSSQKLGFFLVTFGFIWGMMLLHFTIQQRTQPESSSMLREQILDLSKRYIKALAEENRDVVDGPYAGVMTAYDLKKTLAVLLDNILQRIGKLESKVDNLVNGTGANSTNSTTAVPSLVSLEKINVADIINGVQEKCVLPPMDGYPHCEGKIKWMKDMWRSDPCYADYGVDGTSCSFFIYLSEVENWCPRLPWRAKNPYEEADHNSLAEIRTDFNILYGMMKKHEEFRWMRLRIRRMADAWIQAIKSLAEKQNLEKRKRKKILVHLGLLTKESGFKIAETAFSGGPLGELVQWSDLITSLYLLGHDIRISASLAELKEIMKKVVGNRSGCPTVGDRIVELIYIDIVGLAQFKKTLGPSWVHYQCMLRVLDSFGTEPEFNHASYAQSKGHKTPWGKWNLNPQQFYTMFPHTPDNSFLGFVVEQHLNSSDIHHINEIKRQNQSLVYGKVDSFWKNKKIYLDIIHTYMEVHATVYGSSTKNIPSYVKNHGILSGRDLQFLLRETKLFVGLGFPYEGPAPLEAIANGCAFLNPKFNPPKSSKNTDFFIGKPTLRELTSQHPYAEVFIGRPHVWTVDLNNREEVEDAVKAILNQKIEPYMPYEFTCEGMLQRINAFIEKQDFCHGQVMWPPLSALQVKLAEPGQSCKQVCQESQLICEPSFFQHLNKEKDLLKYKVTCQSSELYKDILVPSFYPKSKHCVFQGDLLLFSCAGAHPTHQRICPCRDFIKGQVALCKDCL</sequence>
<keyword id="KW-1015">Disulfide bond</keyword>
<keyword id="KW-0325">Glycoprotein</keyword>
<keyword id="KW-0328">Glycosyltransferase</keyword>
<keyword id="KW-0333">Golgi apparatus</keyword>
<keyword id="KW-0472">Membrane</keyword>
<keyword id="KW-1185">Reference proteome</keyword>
<keyword id="KW-0964">Secreted</keyword>
<keyword id="KW-0735">Signal-anchor</keyword>
<keyword id="KW-0808">Transferase</keyword>
<keyword id="KW-0812">Transmembrane</keyword>
<keyword id="KW-1133">Transmembrane helix</keyword>
<feature type="chain" id="PRO_0000080523" description="Alpha-1,6-mannosylglycoprotein 6-beta-N-acetylglucosaminyltransferase A">
    <location>
        <begin position="1"/>
        <end position="740"/>
    </location>
</feature>
<feature type="chain" id="PRO_0000445693" description="Secreted alpha-1,6-mannosylglycoprotein 6-beta-N-acetylglucosaminyltransferase A" evidence="2">
    <location>
        <begin position="31"/>
        <end position="740"/>
    </location>
</feature>
<feature type="topological domain" description="Cytoplasmic" evidence="3">
    <location>
        <begin position="1"/>
        <end position="13"/>
    </location>
</feature>
<feature type="transmembrane region" description="Helical; Signal-anchor for type II membrane protein" evidence="3">
    <location>
        <begin position="14"/>
        <end position="30"/>
    </location>
</feature>
<feature type="topological domain" description="Lumenal" evidence="3">
    <location>
        <begin position="31"/>
        <end position="740"/>
    </location>
</feature>
<feature type="region of interest" description="Sufficient for catalytic activity" evidence="2">
    <location>
        <begin position="212"/>
        <end position="740"/>
    </location>
</feature>
<feature type="binding site" evidence="2">
    <location>
        <begin position="377"/>
        <end position="378"/>
    </location>
    <ligand>
        <name>substrate</name>
    </ligand>
</feature>
<feature type="binding site" evidence="2">
    <location>
        <position position="525"/>
    </location>
    <ligand>
        <name>UDP-N-acetyl-alpha-D-glucosamine</name>
        <dbReference type="ChEBI" id="CHEBI:57705"/>
    </ligand>
</feature>
<feature type="binding site" evidence="2">
    <location>
        <position position="553"/>
    </location>
    <ligand>
        <name>substrate</name>
    </ligand>
</feature>
<feature type="glycosylation site" description="N-linked (GlcNAc...) asparagine" evidence="3">
    <location>
        <position position="109"/>
    </location>
</feature>
<feature type="glycosylation site" description="N-linked (GlcNAc...) asparagine" evidence="3">
    <location>
        <position position="114"/>
    </location>
</feature>
<feature type="glycosylation site" description="N-linked (GlcNAc...) asparagine" evidence="3">
    <location>
        <position position="117"/>
    </location>
</feature>
<feature type="glycosylation site" description="N-linked (GlcNAc...) asparagine" evidence="3">
    <location>
        <position position="333"/>
    </location>
</feature>
<feature type="glycosylation site" description="N-linked (GlcNAc...) asparagine" evidence="3">
    <location>
        <position position="432"/>
    </location>
</feature>
<feature type="glycosylation site" description="N-linked (GlcNAc...) asparagine" evidence="3">
    <location>
        <position position="446"/>
    </location>
</feature>
<feature type="disulfide bond" evidence="2">
    <location>
        <begin position="144"/>
        <end position="182"/>
    </location>
</feature>
<feature type="disulfide bond" evidence="2">
    <location>
        <begin position="155"/>
        <end position="195"/>
    </location>
</feature>
<feature type="disulfide bond" evidence="2">
    <location>
        <begin position="171"/>
        <end position="337"/>
    </location>
</feature>
<feature type="disulfide bond" evidence="2">
    <location>
        <begin position="371"/>
        <end position="625"/>
    </location>
</feature>
<feature type="disulfide bond" evidence="2">
    <location>
        <begin position="648"/>
        <end position="723"/>
    </location>
</feature>
<feature type="disulfide bond" evidence="2">
    <location>
        <begin position="652"/>
        <end position="725"/>
    </location>
</feature>
<feature type="disulfide bond" evidence="2">
    <location>
        <begin position="659"/>
        <end position="712"/>
    </location>
</feature>
<feature type="disulfide bond" evidence="2">
    <location>
        <begin position="680"/>
        <end position="701"/>
    </location>
</feature>
<feature type="disulfide bond" evidence="2">
    <location>
        <begin position="736"/>
        <end position="739"/>
    </location>
</feature>
<organism>
    <name type="scientific">Mus musculus</name>
    <name type="common">Mouse</name>
    <dbReference type="NCBI Taxonomy" id="10090"/>
    <lineage>
        <taxon>Eukaryota</taxon>
        <taxon>Metazoa</taxon>
        <taxon>Chordata</taxon>
        <taxon>Craniata</taxon>
        <taxon>Vertebrata</taxon>
        <taxon>Euteleostomi</taxon>
        <taxon>Mammalia</taxon>
        <taxon>Eutheria</taxon>
        <taxon>Euarchontoglires</taxon>
        <taxon>Glires</taxon>
        <taxon>Rodentia</taxon>
        <taxon>Myomorpha</taxon>
        <taxon>Muroidea</taxon>
        <taxon>Muridae</taxon>
        <taxon>Murinae</taxon>
        <taxon>Mus</taxon>
        <taxon>Mus</taxon>
    </lineage>
</organism>
<proteinExistence type="evidence at protein level"/>
<reference key="1">
    <citation type="journal article" date="2002" name="Glycobiology">
        <title>Sequences of the mouse N-acetylglucosaminyltransferase V (Mgat5) mRNA and an mRNA expressed by an Mgat5-deficient cell line.</title>
        <authorList>
            <person name="Alverez K."/>
            <person name="Haswell C."/>
            <person name="St Clair M."/>
            <person name="Perng G.S."/>
            <person name="Shorebah M."/>
            <person name="Pierce M."/>
            <person name="Fregien N."/>
        </authorList>
    </citation>
    <scope>NUCLEOTIDE SEQUENCE [MRNA]</scope>
    <scope>FUNCTION</scope>
    <scope>CATALYTIC ACTIVITY</scope>
    <scope>PATHWAY</scope>
</reference>
<reference key="2">
    <citation type="journal article" date="2005" name="Science">
        <title>The transcriptional landscape of the mammalian genome.</title>
        <authorList>
            <person name="Carninci P."/>
            <person name="Kasukawa T."/>
            <person name="Katayama S."/>
            <person name="Gough J."/>
            <person name="Frith M.C."/>
            <person name="Maeda N."/>
            <person name="Oyama R."/>
            <person name="Ravasi T."/>
            <person name="Lenhard B."/>
            <person name="Wells C."/>
            <person name="Kodzius R."/>
            <person name="Shimokawa K."/>
            <person name="Bajic V.B."/>
            <person name="Brenner S.E."/>
            <person name="Batalov S."/>
            <person name="Forrest A.R."/>
            <person name="Zavolan M."/>
            <person name="Davis M.J."/>
            <person name="Wilming L.G."/>
            <person name="Aidinis V."/>
            <person name="Allen J.E."/>
            <person name="Ambesi-Impiombato A."/>
            <person name="Apweiler R."/>
            <person name="Aturaliya R.N."/>
            <person name="Bailey T.L."/>
            <person name="Bansal M."/>
            <person name="Baxter L."/>
            <person name="Beisel K.W."/>
            <person name="Bersano T."/>
            <person name="Bono H."/>
            <person name="Chalk A.M."/>
            <person name="Chiu K.P."/>
            <person name="Choudhary V."/>
            <person name="Christoffels A."/>
            <person name="Clutterbuck D.R."/>
            <person name="Crowe M.L."/>
            <person name="Dalla E."/>
            <person name="Dalrymple B.P."/>
            <person name="de Bono B."/>
            <person name="Della Gatta G."/>
            <person name="di Bernardo D."/>
            <person name="Down T."/>
            <person name="Engstrom P."/>
            <person name="Fagiolini M."/>
            <person name="Faulkner G."/>
            <person name="Fletcher C.F."/>
            <person name="Fukushima T."/>
            <person name="Furuno M."/>
            <person name="Futaki S."/>
            <person name="Gariboldi M."/>
            <person name="Georgii-Hemming P."/>
            <person name="Gingeras T.R."/>
            <person name="Gojobori T."/>
            <person name="Green R.E."/>
            <person name="Gustincich S."/>
            <person name="Harbers M."/>
            <person name="Hayashi Y."/>
            <person name="Hensch T.K."/>
            <person name="Hirokawa N."/>
            <person name="Hill D."/>
            <person name="Huminiecki L."/>
            <person name="Iacono M."/>
            <person name="Ikeo K."/>
            <person name="Iwama A."/>
            <person name="Ishikawa T."/>
            <person name="Jakt M."/>
            <person name="Kanapin A."/>
            <person name="Katoh M."/>
            <person name="Kawasawa Y."/>
            <person name="Kelso J."/>
            <person name="Kitamura H."/>
            <person name="Kitano H."/>
            <person name="Kollias G."/>
            <person name="Krishnan S.P."/>
            <person name="Kruger A."/>
            <person name="Kummerfeld S.K."/>
            <person name="Kurochkin I.V."/>
            <person name="Lareau L.F."/>
            <person name="Lazarevic D."/>
            <person name="Lipovich L."/>
            <person name="Liu J."/>
            <person name="Liuni S."/>
            <person name="McWilliam S."/>
            <person name="Madan Babu M."/>
            <person name="Madera M."/>
            <person name="Marchionni L."/>
            <person name="Matsuda H."/>
            <person name="Matsuzawa S."/>
            <person name="Miki H."/>
            <person name="Mignone F."/>
            <person name="Miyake S."/>
            <person name="Morris K."/>
            <person name="Mottagui-Tabar S."/>
            <person name="Mulder N."/>
            <person name="Nakano N."/>
            <person name="Nakauchi H."/>
            <person name="Ng P."/>
            <person name="Nilsson R."/>
            <person name="Nishiguchi S."/>
            <person name="Nishikawa S."/>
            <person name="Nori F."/>
            <person name="Ohara O."/>
            <person name="Okazaki Y."/>
            <person name="Orlando V."/>
            <person name="Pang K.C."/>
            <person name="Pavan W.J."/>
            <person name="Pavesi G."/>
            <person name="Pesole G."/>
            <person name="Petrovsky N."/>
            <person name="Piazza S."/>
            <person name="Reed J."/>
            <person name="Reid J.F."/>
            <person name="Ring B.Z."/>
            <person name="Ringwald M."/>
            <person name="Rost B."/>
            <person name="Ruan Y."/>
            <person name="Salzberg S.L."/>
            <person name="Sandelin A."/>
            <person name="Schneider C."/>
            <person name="Schoenbach C."/>
            <person name="Sekiguchi K."/>
            <person name="Semple C.A."/>
            <person name="Seno S."/>
            <person name="Sessa L."/>
            <person name="Sheng Y."/>
            <person name="Shibata Y."/>
            <person name="Shimada H."/>
            <person name="Shimada K."/>
            <person name="Silva D."/>
            <person name="Sinclair B."/>
            <person name="Sperling S."/>
            <person name="Stupka E."/>
            <person name="Sugiura K."/>
            <person name="Sultana R."/>
            <person name="Takenaka Y."/>
            <person name="Taki K."/>
            <person name="Tammoja K."/>
            <person name="Tan S.L."/>
            <person name="Tang S."/>
            <person name="Taylor M.S."/>
            <person name="Tegner J."/>
            <person name="Teichmann S.A."/>
            <person name="Ueda H.R."/>
            <person name="van Nimwegen E."/>
            <person name="Verardo R."/>
            <person name="Wei C.L."/>
            <person name="Yagi K."/>
            <person name="Yamanishi H."/>
            <person name="Zabarovsky E."/>
            <person name="Zhu S."/>
            <person name="Zimmer A."/>
            <person name="Hide W."/>
            <person name="Bult C."/>
            <person name="Grimmond S.M."/>
            <person name="Teasdale R.D."/>
            <person name="Liu E.T."/>
            <person name="Brusic V."/>
            <person name="Quackenbush J."/>
            <person name="Wahlestedt C."/>
            <person name="Mattick J.S."/>
            <person name="Hume D.A."/>
            <person name="Kai C."/>
            <person name="Sasaki D."/>
            <person name="Tomaru Y."/>
            <person name="Fukuda S."/>
            <person name="Kanamori-Katayama M."/>
            <person name="Suzuki M."/>
            <person name="Aoki J."/>
            <person name="Arakawa T."/>
            <person name="Iida J."/>
            <person name="Imamura K."/>
            <person name="Itoh M."/>
            <person name="Kato T."/>
            <person name="Kawaji H."/>
            <person name="Kawagashira N."/>
            <person name="Kawashima T."/>
            <person name="Kojima M."/>
            <person name="Kondo S."/>
            <person name="Konno H."/>
            <person name="Nakano K."/>
            <person name="Ninomiya N."/>
            <person name="Nishio T."/>
            <person name="Okada M."/>
            <person name="Plessy C."/>
            <person name="Shibata K."/>
            <person name="Shiraki T."/>
            <person name="Suzuki S."/>
            <person name="Tagami M."/>
            <person name="Waki K."/>
            <person name="Watahiki A."/>
            <person name="Okamura-Oho Y."/>
            <person name="Suzuki H."/>
            <person name="Kawai J."/>
            <person name="Hayashizaki Y."/>
        </authorList>
    </citation>
    <scope>NUCLEOTIDE SEQUENCE [LARGE SCALE MRNA]</scope>
    <source>
        <strain>C57BL/6J</strain>
        <tissue>Pituitary</tissue>
    </source>
</reference>
<reference key="3">
    <citation type="journal article" date="2000" name="Nat. Med.">
        <title>Suppression of tumor growth and metastasis in Mgat5-deficient mice.</title>
        <authorList>
            <person name="Granovsky M."/>
            <person name="Fata J."/>
            <person name="Pawling J."/>
            <person name="Muller W.J."/>
            <person name="Khokha R."/>
            <person name="Dennis J.W."/>
        </authorList>
    </citation>
    <scope>FUNCTION</scope>
    <scope>CATALYTIC ACTIVITY</scope>
    <scope>PATHWAY</scope>
    <scope>DISRUPTION PHENOTYPE</scope>
    <scope>TISSUE SPECIFICITY</scope>
    <scope>SUBCELLULAR LOCATION</scope>
</reference>
<reference key="4">
    <citation type="journal article" date="2001" name="Nature">
        <title>Negative regulation of T-cell activation and autoimmunity by Mgat5 N-glycosylation.</title>
        <authorList>
            <person name="Demetriou M."/>
            <person name="Granovsky M."/>
            <person name="Quaggin S."/>
            <person name="Dennis J.W."/>
        </authorList>
    </citation>
    <scope>FUNCTION</scope>
    <scope>DISRUPTION PHENOTYPE</scope>
</reference>
<reference key="5">
    <citation type="journal article" date="2003" name="J. Biol. Chem.">
        <title>N-acetylglucosaminyltransferase V expression levels regulate cadherin-associated homotypic cell-cell adhesion and intracellular signaling pathways.</title>
        <authorList>
            <person name="Guo H.B."/>
            <person name="Lee I."/>
            <person name="Kamar M."/>
            <person name="Pierce M."/>
        </authorList>
    </citation>
    <scope>FUNCTION</scope>
    <scope>DISRUPTION PHENOTYPE</scope>
</reference>
<reference key="6">
    <citation type="journal article" date="2004" name="Science">
        <title>Regulation of cytokine receptors by Golgi N-glycan processing and endocytosis.</title>
        <authorList>
            <person name="Partridge E.A."/>
            <person name="Le Roy C."/>
            <person name="Di Guglielmo G.M."/>
            <person name="Pawling J."/>
            <person name="Cheung P."/>
            <person name="Granovsky M."/>
            <person name="Nabi I.R."/>
            <person name="Wrana J.L."/>
            <person name="Dennis J.W."/>
        </authorList>
    </citation>
    <scope>FUNCTION</scope>
    <scope>DISRUPTION PHENOTYPE</scope>
</reference>
<reference key="7">
    <citation type="journal article" date="2012" name="J. Biol. Chem.">
        <title>Developmental expression of the neuron-specific N-acetylglucosaminyltransferase Vb (GnT-Vb/IX) and identification of its in vivo glycan products in comparison with those of its paralog, GnT-V.</title>
        <authorList>
            <person name="Lee J.K."/>
            <person name="Matthews R.T."/>
            <person name="Lim J.M."/>
            <person name="Swanier K."/>
            <person name="Wells L."/>
            <person name="Pierce J.M."/>
        </authorList>
    </citation>
    <scope>DISRUPTION PHENOTYPE</scope>
    <scope>FUNCTION</scope>
    <scope>PATHWAY</scope>
</reference>
<name>MGT5A_MOUSE</name>
<dbReference type="EC" id="2.4.1.155" evidence="4 6"/>
<dbReference type="EMBL" id="AF474154">
    <property type="protein sequence ID" value="AAL83249.1"/>
    <property type="molecule type" value="mRNA"/>
</dbReference>
<dbReference type="EMBL" id="AK030402">
    <property type="protein sequence ID" value="BAC26946.1"/>
    <property type="molecule type" value="mRNA"/>
</dbReference>
<dbReference type="CCDS" id="CCDS15245.1"/>
<dbReference type="RefSeq" id="NP_660110.2">
    <property type="nucleotide sequence ID" value="NM_145128.3"/>
</dbReference>
<dbReference type="RefSeq" id="XP_006529118.1">
    <property type="nucleotide sequence ID" value="XM_006529055.5"/>
</dbReference>
<dbReference type="RefSeq" id="XP_006529119.1">
    <property type="nucleotide sequence ID" value="XM_006529056.5"/>
</dbReference>
<dbReference type="RefSeq" id="XP_006529120.1">
    <property type="nucleotide sequence ID" value="XM_006529057.5"/>
</dbReference>
<dbReference type="RefSeq" id="XP_030110888.1">
    <property type="nucleotide sequence ID" value="XM_030255028.2"/>
</dbReference>
<dbReference type="RefSeq" id="XP_036022125.1">
    <property type="nucleotide sequence ID" value="XM_036166232.1"/>
</dbReference>
<dbReference type="SMR" id="Q8R4G6"/>
<dbReference type="FunCoup" id="Q8R4G6">
    <property type="interactions" value="984"/>
</dbReference>
<dbReference type="STRING" id="10090.ENSMUSP00000038359"/>
<dbReference type="CAZy" id="GT18">
    <property type="family name" value="Glycosyltransferase Family 18"/>
</dbReference>
<dbReference type="GlyCosmos" id="Q8R4G6">
    <property type="glycosylation" value="6 sites, No reported glycans"/>
</dbReference>
<dbReference type="GlyGen" id="Q8R4G6">
    <property type="glycosylation" value="6 sites, 1 N-linked glycan (1 site)"/>
</dbReference>
<dbReference type="iPTMnet" id="Q8R4G6"/>
<dbReference type="PhosphoSitePlus" id="Q8R4G6"/>
<dbReference type="jPOST" id="Q8R4G6"/>
<dbReference type="PaxDb" id="10090-ENSMUSP00000038359"/>
<dbReference type="ProteomicsDB" id="295662"/>
<dbReference type="Antibodypedia" id="33554">
    <property type="antibodies" value="151 antibodies from 25 providers"/>
</dbReference>
<dbReference type="DNASU" id="107895"/>
<dbReference type="Ensembl" id="ENSMUST00000038361.11">
    <property type="protein sequence ID" value="ENSMUSP00000038359.5"/>
    <property type="gene ID" value="ENSMUSG00000036155.14"/>
</dbReference>
<dbReference type="Ensembl" id="ENSMUST00000171405.2">
    <property type="protein sequence ID" value="ENSMUSP00000129166.2"/>
    <property type="gene ID" value="ENSMUSG00000036155.14"/>
</dbReference>
<dbReference type="GeneID" id="107895"/>
<dbReference type="KEGG" id="mmu:107895"/>
<dbReference type="UCSC" id="uc007ckq.1">
    <property type="organism name" value="mouse"/>
</dbReference>
<dbReference type="AGR" id="MGI:894701"/>
<dbReference type="CTD" id="4249"/>
<dbReference type="MGI" id="MGI:894701">
    <property type="gene designation" value="Mgat5"/>
</dbReference>
<dbReference type="VEuPathDB" id="HostDB:ENSMUSG00000036155"/>
<dbReference type="eggNOG" id="ENOG502QTNG">
    <property type="taxonomic scope" value="Eukaryota"/>
</dbReference>
<dbReference type="GeneTree" id="ENSGT00940000153470"/>
<dbReference type="HOGENOM" id="CLU_016749_1_0_1"/>
<dbReference type="InParanoid" id="Q8R4G6"/>
<dbReference type="OMA" id="HCESKLK"/>
<dbReference type="OrthoDB" id="2113294at2759"/>
<dbReference type="PhylomeDB" id="Q8R4G6"/>
<dbReference type="TreeFam" id="TF313714"/>
<dbReference type="Reactome" id="R-MMU-975577">
    <property type="pathway name" value="N-Glycan antennae elongation"/>
</dbReference>
<dbReference type="UniPathway" id="UPA00378"/>
<dbReference type="BioGRID-ORCS" id="107895">
    <property type="hits" value="5 hits in 77 CRISPR screens"/>
</dbReference>
<dbReference type="ChiTaRS" id="Mgat5">
    <property type="organism name" value="mouse"/>
</dbReference>
<dbReference type="PRO" id="PR:Q8R4G6"/>
<dbReference type="Proteomes" id="UP000000589">
    <property type="component" value="Chromosome 1"/>
</dbReference>
<dbReference type="RNAct" id="Q8R4G6">
    <property type="molecule type" value="protein"/>
</dbReference>
<dbReference type="Bgee" id="ENSMUSG00000036155">
    <property type="expression patterns" value="Expressed in paneth cell and 217 other cell types or tissues"/>
</dbReference>
<dbReference type="ExpressionAtlas" id="Q8R4G6">
    <property type="expression patterns" value="baseline and differential"/>
</dbReference>
<dbReference type="GO" id="GO:0005576">
    <property type="term" value="C:extracellular region"/>
    <property type="evidence" value="ECO:0007669"/>
    <property type="project" value="UniProtKB-SubCell"/>
</dbReference>
<dbReference type="GO" id="GO:0005794">
    <property type="term" value="C:Golgi apparatus"/>
    <property type="evidence" value="ECO:0000314"/>
    <property type="project" value="MGI"/>
</dbReference>
<dbReference type="GO" id="GO:0000139">
    <property type="term" value="C:Golgi membrane"/>
    <property type="evidence" value="ECO:0000250"/>
    <property type="project" value="UniProtKB"/>
</dbReference>
<dbReference type="GO" id="GO:0043204">
    <property type="term" value="C:perikaryon"/>
    <property type="evidence" value="ECO:0007669"/>
    <property type="project" value="UniProtKB-SubCell"/>
</dbReference>
<dbReference type="GO" id="GO:0008375">
    <property type="term" value="F:acetylglucosaminyltransferase activity"/>
    <property type="evidence" value="ECO:0000315"/>
    <property type="project" value="MGI"/>
</dbReference>
<dbReference type="GO" id="GO:0030144">
    <property type="term" value="F:alpha-1,6-mannosylglycoprotein 6-beta-N-acetylglucosaminyltransferase activity"/>
    <property type="evidence" value="ECO:0000315"/>
    <property type="project" value="MGI"/>
</dbReference>
<dbReference type="GO" id="GO:0016757">
    <property type="term" value="F:glycosyltransferase activity"/>
    <property type="evidence" value="ECO:0000314"/>
    <property type="project" value="MGI"/>
</dbReference>
<dbReference type="GO" id="GO:0030145">
    <property type="term" value="F:manganese ion binding"/>
    <property type="evidence" value="ECO:0000250"/>
    <property type="project" value="UniProtKB"/>
</dbReference>
<dbReference type="GO" id="GO:0004864">
    <property type="term" value="F:protein phosphatase inhibitor activity"/>
    <property type="evidence" value="ECO:0007669"/>
    <property type="project" value="Ensembl"/>
</dbReference>
<dbReference type="GO" id="GO:0030335">
    <property type="term" value="P:positive regulation of cell migration"/>
    <property type="evidence" value="ECO:0007669"/>
    <property type="project" value="Ensembl"/>
</dbReference>
<dbReference type="GO" id="GO:1904894">
    <property type="term" value="P:positive regulation of receptor signaling pathway via STAT"/>
    <property type="evidence" value="ECO:0007669"/>
    <property type="project" value="Ensembl"/>
</dbReference>
<dbReference type="GO" id="GO:0006487">
    <property type="term" value="P:protein N-linked glycosylation"/>
    <property type="evidence" value="ECO:0000314"/>
    <property type="project" value="MGI"/>
</dbReference>
<dbReference type="GO" id="GO:0018279">
    <property type="term" value="P:protein N-linked glycosylation via asparagine"/>
    <property type="evidence" value="ECO:0000250"/>
    <property type="project" value="UniProtKB"/>
</dbReference>
<dbReference type="InterPro" id="IPR026116">
    <property type="entry name" value="GT18_cat"/>
</dbReference>
<dbReference type="InterPro" id="IPR052105">
    <property type="entry name" value="MGAT5_Glycosyltransferase"/>
</dbReference>
<dbReference type="InterPro" id="IPR027833">
    <property type="entry name" value="MGT5A-like_N"/>
</dbReference>
<dbReference type="PANTHER" id="PTHR15075:SF5">
    <property type="entry name" value="ALPHA-1,6-MANNOSYLGLYCOPROTEIN 6-BETA-N-ACETYLGLUCOSAMINYLTRANSFERASE A"/>
    <property type="match status" value="1"/>
</dbReference>
<dbReference type="PANTHER" id="PTHR15075">
    <property type="entry name" value="ALPHA-MANNOSIDE BETA-1,6-N-ACETYLGLUCOSAMINYLTRANSFERASE"/>
    <property type="match status" value="1"/>
</dbReference>
<dbReference type="Pfam" id="PF15024">
    <property type="entry name" value="Glyco_transf_18"/>
    <property type="match status" value="1"/>
</dbReference>
<dbReference type="Pfam" id="PF15027">
    <property type="entry name" value="MGT5A_N"/>
    <property type="match status" value="1"/>
</dbReference>